<proteinExistence type="evidence at protein level"/>
<organism>
    <name type="scientific">Ovis aries</name>
    <name type="common">Sheep</name>
    <dbReference type="NCBI Taxonomy" id="9940"/>
    <lineage>
        <taxon>Eukaryota</taxon>
        <taxon>Metazoa</taxon>
        <taxon>Chordata</taxon>
        <taxon>Craniata</taxon>
        <taxon>Vertebrata</taxon>
        <taxon>Euteleostomi</taxon>
        <taxon>Mammalia</taxon>
        <taxon>Eutheria</taxon>
        <taxon>Laurasiatheria</taxon>
        <taxon>Artiodactyla</taxon>
        <taxon>Ruminantia</taxon>
        <taxon>Pecora</taxon>
        <taxon>Bovidae</taxon>
        <taxon>Caprinae</taxon>
        <taxon>Ovis</taxon>
    </lineage>
</organism>
<protein>
    <recommendedName>
        <fullName>NADH-ubiquinone oxidoreductase chain 5</fullName>
        <ecNumber evidence="1">7.1.1.2</ecNumber>
    </recommendedName>
    <alternativeName>
        <fullName>NADH dehydrogenase subunit 5</fullName>
    </alternativeName>
</protein>
<comment type="function">
    <text evidence="1">Core subunit of the mitochondrial membrane respiratory chain NADH dehydrogenase (Complex I) which catalyzes electron transfer from NADH through the respiratory chain, using ubiquinone as an electron acceptor. Essential for the catalytic activity and assembly of complex I.</text>
</comment>
<comment type="catalytic activity">
    <reaction evidence="1">
        <text>a ubiquinone + NADH + 5 H(+)(in) = a ubiquinol + NAD(+) + 4 H(+)(out)</text>
        <dbReference type="Rhea" id="RHEA:29091"/>
        <dbReference type="Rhea" id="RHEA-COMP:9565"/>
        <dbReference type="Rhea" id="RHEA-COMP:9566"/>
        <dbReference type="ChEBI" id="CHEBI:15378"/>
        <dbReference type="ChEBI" id="CHEBI:16389"/>
        <dbReference type="ChEBI" id="CHEBI:17976"/>
        <dbReference type="ChEBI" id="CHEBI:57540"/>
        <dbReference type="ChEBI" id="CHEBI:57945"/>
        <dbReference type="EC" id="7.1.1.2"/>
    </reaction>
</comment>
<comment type="subunit">
    <text evidence="2">Core subunit of respiratory chain NADH dehydrogenase (Complex I) which is composed of 45 different subunits.</text>
</comment>
<comment type="subcellular location">
    <subcellularLocation>
        <location evidence="2">Mitochondrion inner membrane</location>
        <topology evidence="3">Multi-pass membrane protein</topology>
    </subcellularLocation>
</comment>
<comment type="similarity">
    <text evidence="4">Belongs to the complex I subunit 5 family.</text>
</comment>
<feature type="chain" id="PRO_0000118149" description="NADH-ubiquinone oxidoreductase chain 5">
    <location>
        <begin position="1"/>
        <end position="606"/>
    </location>
</feature>
<feature type="transmembrane region" description="Helical" evidence="3">
    <location>
        <begin position="4"/>
        <end position="24"/>
    </location>
</feature>
<feature type="transmembrane region" description="Helical" evidence="3">
    <location>
        <begin position="43"/>
        <end position="63"/>
    </location>
</feature>
<feature type="transmembrane region" description="Helical" evidence="3">
    <location>
        <begin position="84"/>
        <end position="104"/>
    </location>
</feature>
<feature type="transmembrane region" description="Helical" evidence="3">
    <location>
        <begin position="114"/>
        <end position="134"/>
    </location>
</feature>
<feature type="transmembrane region" description="Helical" evidence="3">
    <location>
        <begin position="140"/>
        <end position="160"/>
    </location>
</feature>
<feature type="transmembrane region" description="Helical" evidence="3">
    <location>
        <begin position="171"/>
        <end position="191"/>
    </location>
</feature>
<feature type="transmembrane region" description="Helical" evidence="3">
    <location>
        <begin position="213"/>
        <end position="233"/>
    </location>
</feature>
<feature type="transmembrane region" description="Helical" evidence="3">
    <location>
        <begin position="241"/>
        <end position="261"/>
    </location>
</feature>
<feature type="transmembrane region" description="Helical" evidence="3">
    <location>
        <begin position="272"/>
        <end position="292"/>
    </location>
</feature>
<feature type="transmembrane region" description="Helical" evidence="3">
    <location>
        <begin position="301"/>
        <end position="320"/>
    </location>
</feature>
<feature type="transmembrane region" description="Helical" evidence="3">
    <location>
        <begin position="325"/>
        <end position="347"/>
    </location>
</feature>
<feature type="transmembrane region" description="Helical" evidence="3">
    <location>
        <begin position="366"/>
        <end position="386"/>
    </location>
</feature>
<feature type="transmembrane region" description="Helical" evidence="3">
    <location>
        <begin position="413"/>
        <end position="433"/>
    </location>
</feature>
<feature type="transmembrane region" description="Helical" evidence="3">
    <location>
        <begin position="457"/>
        <end position="477"/>
    </location>
</feature>
<feature type="transmembrane region" description="Helical" evidence="3">
    <location>
        <begin position="485"/>
        <end position="505"/>
    </location>
</feature>
<feature type="transmembrane region" description="Helical" evidence="3">
    <location>
        <begin position="582"/>
        <end position="602"/>
    </location>
</feature>
<feature type="helix" evidence="6">
    <location>
        <begin position="2"/>
        <end position="23"/>
    </location>
</feature>
<feature type="helix" evidence="6">
    <location>
        <begin position="32"/>
        <end position="57"/>
    </location>
</feature>
<feature type="strand" evidence="6">
    <location>
        <begin position="61"/>
        <end position="71"/>
    </location>
</feature>
<feature type="strand" evidence="6">
    <location>
        <begin position="74"/>
        <end position="83"/>
    </location>
</feature>
<feature type="helix" evidence="6">
    <location>
        <begin position="84"/>
        <end position="107"/>
    </location>
</feature>
<feature type="turn" evidence="6">
    <location>
        <begin position="108"/>
        <end position="110"/>
    </location>
</feature>
<feature type="helix" evidence="6">
    <location>
        <begin position="114"/>
        <end position="133"/>
    </location>
</feature>
<feature type="strand" evidence="6">
    <location>
        <begin position="134"/>
        <end position="136"/>
    </location>
</feature>
<feature type="helix" evidence="6">
    <location>
        <begin position="137"/>
        <end position="155"/>
    </location>
</feature>
<feature type="strand" evidence="8">
    <location>
        <begin position="156"/>
        <end position="158"/>
    </location>
</feature>
<feature type="helix" evidence="6">
    <location>
        <begin position="162"/>
        <end position="193"/>
    </location>
</feature>
<feature type="helix" evidence="6">
    <location>
        <begin position="198"/>
        <end position="204"/>
    </location>
</feature>
<feature type="helix" evidence="6">
    <location>
        <begin position="210"/>
        <end position="223"/>
    </location>
</feature>
<feature type="helix" evidence="6">
    <location>
        <begin position="232"/>
        <end position="235"/>
    </location>
</feature>
<feature type="helix" evidence="6">
    <location>
        <begin position="236"/>
        <end position="238"/>
    </location>
</feature>
<feature type="helix" evidence="6">
    <location>
        <begin position="241"/>
        <end position="246"/>
    </location>
</feature>
<feature type="helix" evidence="6">
    <location>
        <begin position="247"/>
        <end position="251"/>
    </location>
</feature>
<feature type="helix" evidence="9">
    <location>
        <begin position="252"/>
        <end position="254"/>
    </location>
</feature>
<feature type="helix" evidence="6">
    <location>
        <begin position="255"/>
        <end position="262"/>
    </location>
</feature>
<feature type="helix" evidence="6">
    <location>
        <begin position="264"/>
        <end position="267"/>
    </location>
</feature>
<feature type="helix" evidence="6">
    <location>
        <begin position="271"/>
        <end position="291"/>
    </location>
</feature>
<feature type="helix" evidence="7">
    <location>
        <begin position="292"/>
        <end position="294"/>
    </location>
</feature>
<feature type="helix" evidence="6">
    <location>
        <begin position="298"/>
        <end position="318"/>
    </location>
</feature>
<feature type="helix" evidence="6">
    <location>
        <begin position="322"/>
        <end position="349"/>
    </location>
</feature>
<feature type="helix" evidence="6">
    <location>
        <begin position="356"/>
        <end position="358"/>
    </location>
</feature>
<feature type="helix" evidence="6">
    <location>
        <begin position="362"/>
        <end position="365"/>
    </location>
</feature>
<feature type="helix" evidence="6">
    <location>
        <begin position="367"/>
        <end position="380"/>
    </location>
</feature>
<feature type="helix" evidence="6">
    <location>
        <begin position="389"/>
        <end position="400"/>
    </location>
</feature>
<feature type="strand" evidence="6">
    <location>
        <begin position="401"/>
        <end position="404"/>
    </location>
</feature>
<feature type="helix" evidence="6">
    <location>
        <begin position="406"/>
        <end position="430"/>
    </location>
</feature>
<feature type="strand" evidence="6">
    <location>
        <begin position="432"/>
        <end position="434"/>
    </location>
</feature>
<feature type="strand" evidence="6">
    <location>
        <begin position="439"/>
        <end position="441"/>
    </location>
</feature>
<feature type="helix" evidence="6">
    <location>
        <begin position="448"/>
        <end position="471"/>
    </location>
</feature>
<feature type="helix" evidence="6">
    <location>
        <begin position="484"/>
        <end position="487"/>
    </location>
</feature>
<feature type="helix" evidence="6">
    <location>
        <begin position="489"/>
        <end position="506"/>
    </location>
</feature>
<feature type="helix" evidence="6">
    <location>
        <begin position="507"/>
        <end position="509"/>
    </location>
</feature>
<feature type="helix" evidence="6">
    <location>
        <begin position="518"/>
        <end position="524"/>
    </location>
</feature>
<feature type="helix" evidence="6">
    <location>
        <begin position="526"/>
        <end position="528"/>
    </location>
</feature>
<feature type="helix" evidence="6">
    <location>
        <begin position="529"/>
        <end position="546"/>
    </location>
</feature>
<feature type="helix" evidence="6">
    <location>
        <begin position="547"/>
        <end position="556"/>
    </location>
</feature>
<feature type="helix" evidence="6">
    <location>
        <begin position="557"/>
        <end position="561"/>
    </location>
</feature>
<feature type="helix" evidence="6">
    <location>
        <begin position="563"/>
        <end position="577"/>
    </location>
</feature>
<feature type="helix" evidence="6">
    <location>
        <begin position="584"/>
        <end position="600"/>
    </location>
</feature>
<dbReference type="EC" id="7.1.1.2" evidence="1"/>
<dbReference type="EMBL" id="AF010406">
    <property type="protein sequence ID" value="AAD10105.1"/>
    <property type="molecule type" value="Genomic_DNA"/>
</dbReference>
<dbReference type="PIR" id="T11060">
    <property type="entry name" value="T11060"/>
</dbReference>
<dbReference type="RefSeq" id="NP_008416.1">
    <property type="nucleotide sequence ID" value="NC_001941.1"/>
</dbReference>
<dbReference type="PDB" id="5LNK">
    <property type="method" value="EM"/>
    <property type="resolution" value="3.90 A"/>
    <property type="chains" value="L=1-599"/>
</dbReference>
<dbReference type="PDB" id="6Q9B">
    <property type="method" value="EM"/>
    <property type="resolution" value="3.90 A"/>
    <property type="chains" value="D5=1-606"/>
</dbReference>
<dbReference type="PDB" id="6QA9">
    <property type="method" value="EM"/>
    <property type="resolution" value="4.10 A"/>
    <property type="chains" value="D5=1-606"/>
</dbReference>
<dbReference type="PDB" id="6QBX">
    <property type="method" value="EM"/>
    <property type="resolution" value="4.20 A"/>
    <property type="chains" value="D5=1-606"/>
</dbReference>
<dbReference type="PDB" id="6QC2">
    <property type="method" value="EM"/>
    <property type="resolution" value="4.20 A"/>
    <property type="chains" value="D5=1-606"/>
</dbReference>
<dbReference type="PDB" id="6QC3">
    <property type="method" value="EM"/>
    <property type="resolution" value="4.20 A"/>
    <property type="chains" value="D5=1-606"/>
</dbReference>
<dbReference type="PDB" id="6QC4">
    <property type="method" value="EM"/>
    <property type="resolution" value="4.60 A"/>
    <property type="chains" value="D5=1-606"/>
</dbReference>
<dbReference type="PDB" id="6QC5">
    <property type="method" value="EM"/>
    <property type="resolution" value="4.30 A"/>
    <property type="chains" value="D5=1-606"/>
</dbReference>
<dbReference type="PDB" id="6QC6">
    <property type="method" value="EM"/>
    <property type="resolution" value="4.10 A"/>
    <property type="chains" value="D5=1-606"/>
</dbReference>
<dbReference type="PDB" id="6QC7">
    <property type="method" value="EM"/>
    <property type="resolution" value="4.40 A"/>
    <property type="chains" value="D5=1-606"/>
</dbReference>
<dbReference type="PDB" id="6QC8">
    <property type="method" value="EM"/>
    <property type="resolution" value="4.20 A"/>
    <property type="chains" value="D5=1-606"/>
</dbReference>
<dbReference type="PDB" id="6QC9">
    <property type="method" value="EM"/>
    <property type="resolution" value="5.70 A"/>
    <property type="chains" value="D5=1-606"/>
</dbReference>
<dbReference type="PDB" id="6QCA">
    <property type="method" value="EM"/>
    <property type="resolution" value="6.20 A"/>
    <property type="chains" value="D5=1-606"/>
</dbReference>
<dbReference type="PDB" id="6QCF">
    <property type="method" value="EM"/>
    <property type="resolution" value="6.50 A"/>
    <property type="chains" value="D5=1-606"/>
</dbReference>
<dbReference type="PDB" id="6ZKA">
    <property type="method" value="EM"/>
    <property type="resolution" value="2.50 A"/>
    <property type="chains" value="L=1-606"/>
</dbReference>
<dbReference type="PDB" id="6ZKB">
    <property type="method" value="EM"/>
    <property type="resolution" value="2.90 A"/>
    <property type="chains" value="L=1-606"/>
</dbReference>
<dbReference type="PDB" id="6ZKC">
    <property type="method" value="EM"/>
    <property type="resolution" value="3.10 A"/>
    <property type="chains" value="L=1-606"/>
</dbReference>
<dbReference type="PDB" id="6ZKD">
    <property type="method" value="EM"/>
    <property type="resolution" value="2.70 A"/>
    <property type="chains" value="L=1-606"/>
</dbReference>
<dbReference type="PDB" id="6ZKE">
    <property type="method" value="EM"/>
    <property type="resolution" value="2.60 A"/>
    <property type="chains" value="L=1-606"/>
</dbReference>
<dbReference type="PDB" id="6ZKF">
    <property type="method" value="EM"/>
    <property type="resolution" value="2.80 A"/>
    <property type="chains" value="L=1-606"/>
</dbReference>
<dbReference type="PDB" id="6ZKG">
    <property type="method" value="EM"/>
    <property type="resolution" value="3.40 A"/>
    <property type="chains" value="L=1-606"/>
</dbReference>
<dbReference type="PDB" id="6ZKH">
    <property type="method" value="EM"/>
    <property type="resolution" value="3.00 A"/>
    <property type="chains" value="L=1-606"/>
</dbReference>
<dbReference type="PDB" id="6ZKI">
    <property type="method" value="EM"/>
    <property type="resolution" value="2.80 A"/>
    <property type="chains" value="L=1-606"/>
</dbReference>
<dbReference type="PDB" id="6ZKJ">
    <property type="method" value="EM"/>
    <property type="resolution" value="3.00 A"/>
    <property type="chains" value="L=1-606"/>
</dbReference>
<dbReference type="PDB" id="6ZKK">
    <property type="method" value="EM"/>
    <property type="resolution" value="3.70 A"/>
    <property type="chains" value="L=1-606"/>
</dbReference>
<dbReference type="PDB" id="6ZKL">
    <property type="method" value="EM"/>
    <property type="resolution" value="3.10 A"/>
    <property type="chains" value="L=1-606"/>
</dbReference>
<dbReference type="PDB" id="6ZKM">
    <property type="method" value="EM"/>
    <property type="resolution" value="2.80 A"/>
    <property type="chains" value="L=1-606"/>
</dbReference>
<dbReference type="PDB" id="6ZKN">
    <property type="method" value="EM"/>
    <property type="resolution" value="2.90 A"/>
    <property type="chains" value="L=1-606"/>
</dbReference>
<dbReference type="PDB" id="6ZKO">
    <property type="method" value="EM"/>
    <property type="resolution" value="3.80 A"/>
    <property type="chains" value="L=1-606"/>
</dbReference>
<dbReference type="PDB" id="6ZKP">
    <property type="method" value="EM"/>
    <property type="resolution" value="3.20 A"/>
    <property type="chains" value="L=1-606"/>
</dbReference>
<dbReference type="PDB" id="6ZKQ">
    <property type="method" value="EM"/>
    <property type="resolution" value="3.30 A"/>
    <property type="chains" value="L=1-606"/>
</dbReference>
<dbReference type="PDB" id="6ZKR">
    <property type="method" value="EM"/>
    <property type="resolution" value="3.50 A"/>
    <property type="chains" value="L=1-606"/>
</dbReference>
<dbReference type="PDB" id="6ZKS">
    <property type="method" value="EM"/>
    <property type="resolution" value="3.10 A"/>
    <property type="chains" value="L=1-606"/>
</dbReference>
<dbReference type="PDB" id="6ZKT">
    <property type="method" value="EM"/>
    <property type="resolution" value="2.80 A"/>
    <property type="chains" value="L=1-606"/>
</dbReference>
<dbReference type="PDB" id="6ZKU">
    <property type="method" value="EM"/>
    <property type="resolution" value="3.00 A"/>
    <property type="chains" value="L=1-606"/>
</dbReference>
<dbReference type="PDB" id="6ZKV">
    <property type="method" value="EM"/>
    <property type="resolution" value="2.90 A"/>
    <property type="chains" value="L=1-606"/>
</dbReference>
<dbReference type="PDB" id="7ZD6">
    <property type="method" value="EM"/>
    <property type="resolution" value="3.16 A"/>
    <property type="chains" value="L=1-606"/>
</dbReference>
<dbReference type="PDB" id="7ZDH">
    <property type="method" value="EM"/>
    <property type="resolution" value="3.46 A"/>
    <property type="chains" value="L=1-606"/>
</dbReference>
<dbReference type="PDB" id="7ZDJ">
    <property type="method" value="EM"/>
    <property type="resolution" value="3.25 A"/>
    <property type="chains" value="L=1-606"/>
</dbReference>
<dbReference type="PDB" id="7ZDM">
    <property type="method" value="EM"/>
    <property type="resolution" value="3.44 A"/>
    <property type="chains" value="L=1-606"/>
</dbReference>
<dbReference type="PDB" id="7ZDP">
    <property type="method" value="EM"/>
    <property type="resolution" value="3.88 A"/>
    <property type="chains" value="L=1-606"/>
</dbReference>
<dbReference type="PDB" id="7ZEB">
    <property type="method" value="EM"/>
    <property type="resolution" value="3.80 A"/>
    <property type="chains" value="L=1-606"/>
</dbReference>
<dbReference type="PDBsum" id="5LNK"/>
<dbReference type="PDBsum" id="6Q9B"/>
<dbReference type="PDBsum" id="6QA9"/>
<dbReference type="PDBsum" id="6QBX"/>
<dbReference type="PDBsum" id="6QC2"/>
<dbReference type="PDBsum" id="6QC3"/>
<dbReference type="PDBsum" id="6QC4"/>
<dbReference type="PDBsum" id="6QC5"/>
<dbReference type="PDBsum" id="6QC6"/>
<dbReference type="PDBsum" id="6QC7"/>
<dbReference type="PDBsum" id="6QC8"/>
<dbReference type="PDBsum" id="6QC9"/>
<dbReference type="PDBsum" id="6QCA"/>
<dbReference type="PDBsum" id="6QCF"/>
<dbReference type="PDBsum" id="6ZKA"/>
<dbReference type="PDBsum" id="6ZKB"/>
<dbReference type="PDBsum" id="6ZKC"/>
<dbReference type="PDBsum" id="6ZKD"/>
<dbReference type="PDBsum" id="6ZKE"/>
<dbReference type="PDBsum" id="6ZKF"/>
<dbReference type="PDBsum" id="6ZKG"/>
<dbReference type="PDBsum" id="6ZKH"/>
<dbReference type="PDBsum" id="6ZKI"/>
<dbReference type="PDBsum" id="6ZKJ"/>
<dbReference type="PDBsum" id="6ZKK"/>
<dbReference type="PDBsum" id="6ZKL"/>
<dbReference type="PDBsum" id="6ZKM"/>
<dbReference type="PDBsum" id="6ZKN"/>
<dbReference type="PDBsum" id="6ZKO"/>
<dbReference type="PDBsum" id="6ZKP"/>
<dbReference type="PDBsum" id="6ZKQ"/>
<dbReference type="PDBsum" id="6ZKR"/>
<dbReference type="PDBsum" id="6ZKS"/>
<dbReference type="PDBsum" id="6ZKT"/>
<dbReference type="PDBsum" id="6ZKU"/>
<dbReference type="PDBsum" id="6ZKV"/>
<dbReference type="PDBsum" id="7ZD6"/>
<dbReference type="PDBsum" id="7ZDH"/>
<dbReference type="PDBsum" id="7ZDJ"/>
<dbReference type="PDBsum" id="7ZDM"/>
<dbReference type="PDBsum" id="7ZDP"/>
<dbReference type="PDBsum" id="7ZEB"/>
<dbReference type="EMDB" id="EMD-11242"/>
<dbReference type="EMDB" id="EMD-11243"/>
<dbReference type="EMDB" id="EMD-11244"/>
<dbReference type="EMDB" id="EMD-11245"/>
<dbReference type="EMDB" id="EMD-11246"/>
<dbReference type="EMDB" id="EMD-11247"/>
<dbReference type="EMDB" id="EMD-11248"/>
<dbReference type="EMDB" id="EMD-11249"/>
<dbReference type="EMDB" id="EMD-11250"/>
<dbReference type="EMDB" id="EMD-11251"/>
<dbReference type="EMDB" id="EMD-11252"/>
<dbReference type="EMDB" id="EMD-11253"/>
<dbReference type="EMDB" id="EMD-11254"/>
<dbReference type="EMDB" id="EMD-11255"/>
<dbReference type="EMDB" id="EMD-11256"/>
<dbReference type="EMDB" id="EMD-11257"/>
<dbReference type="EMDB" id="EMD-11258"/>
<dbReference type="EMDB" id="EMD-11259"/>
<dbReference type="EMDB" id="EMD-11260"/>
<dbReference type="EMDB" id="EMD-11261"/>
<dbReference type="EMDB" id="EMD-11262"/>
<dbReference type="EMDB" id="EMD-11263"/>
<dbReference type="EMDB" id="EMD-14637"/>
<dbReference type="EMDB" id="EMD-14648"/>
<dbReference type="EMDB" id="EMD-14651"/>
<dbReference type="EMDB" id="EMD-14658"/>
<dbReference type="EMDB" id="EMD-14664"/>
<dbReference type="EMDB" id="EMD-14688"/>
<dbReference type="EMDB" id="EMD-4479"/>
<dbReference type="EMDB" id="EMD-4482"/>
<dbReference type="EMDB" id="EMD-4493"/>
<dbReference type="EMDB" id="EMD-4494"/>
<dbReference type="EMDB" id="EMD-4495"/>
<dbReference type="EMDB" id="EMD-4496"/>
<dbReference type="EMDB" id="EMD-4497"/>
<dbReference type="EMDB" id="EMD-4498"/>
<dbReference type="EMDB" id="EMD-4499"/>
<dbReference type="EMDB" id="EMD-4500"/>
<dbReference type="EMDB" id="EMD-4501"/>
<dbReference type="EMDB" id="EMD-4502"/>
<dbReference type="EMDB" id="EMD-4505"/>
<dbReference type="EMDB" id="EMD-8128"/>
<dbReference type="SMR" id="O78756"/>
<dbReference type="STRING" id="9940.ENSOARP00000000011"/>
<dbReference type="PaxDb" id="9940-ENSOARP00000000011"/>
<dbReference type="Ensembl" id="ENSOART00025000033">
    <property type="protein sequence ID" value="ENSOARP00025000012"/>
    <property type="gene ID" value="ENSOARG00025000033"/>
</dbReference>
<dbReference type="Ensembl" id="ENSOART00040000033">
    <property type="protein sequence ID" value="ENSOARP00040000012"/>
    <property type="gene ID" value="ENSOARG00040000033"/>
</dbReference>
<dbReference type="Ensembl" id="ENSOART00180000033">
    <property type="protein sequence ID" value="ENSOARP00180000012"/>
    <property type="gene ID" value="ENSOARG00180000033"/>
</dbReference>
<dbReference type="Ensembl" id="ENSOART00185000033">
    <property type="protein sequence ID" value="ENSOARP00185000012"/>
    <property type="gene ID" value="ENSOARG00185000033"/>
</dbReference>
<dbReference type="Ensembl" id="ENSOART00215000033">
    <property type="protein sequence ID" value="ENSOARP00215000012"/>
    <property type="gene ID" value="ENSOARG00215000033"/>
</dbReference>
<dbReference type="Ensembl" id="ENSOART00220000033">
    <property type="protein sequence ID" value="ENSOARP00220000012"/>
    <property type="gene ID" value="ENSOARG00220000033"/>
</dbReference>
<dbReference type="Ensembl" id="ENSOART00225000033">
    <property type="protein sequence ID" value="ENSOARP00225000012"/>
    <property type="gene ID" value="ENSOARG00225000033"/>
</dbReference>
<dbReference type="Ensembl" id="ENSOART00260000033">
    <property type="protein sequence ID" value="ENSOARP00260000012"/>
    <property type="gene ID" value="ENSOARG00260000033"/>
</dbReference>
<dbReference type="GeneID" id="808258"/>
<dbReference type="KEGG" id="oas:808258"/>
<dbReference type="CTD" id="4540"/>
<dbReference type="eggNOG" id="KOG4668">
    <property type="taxonomic scope" value="Eukaryota"/>
</dbReference>
<dbReference type="HOGENOM" id="CLU_007100_6_0_1"/>
<dbReference type="OMA" id="GVGIMSF"/>
<dbReference type="OrthoDB" id="10069788at2759"/>
<dbReference type="Proteomes" id="UP000002356">
    <property type="component" value="Mitochondrion"/>
</dbReference>
<dbReference type="Bgee" id="ENSOARG00000000032">
    <property type="expression patterns" value="Expressed in cardiac muscle tissue of left auricle and 55 other cell types or tissues"/>
</dbReference>
<dbReference type="ExpressionAtlas" id="O78756">
    <property type="expression patterns" value="baseline and differential"/>
</dbReference>
<dbReference type="GO" id="GO:0005743">
    <property type="term" value="C:mitochondrial inner membrane"/>
    <property type="evidence" value="ECO:0000250"/>
    <property type="project" value="UniProtKB"/>
</dbReference>
<dbReference type="GO" id="GO:0045271">
    <property type="term" value="C:respiratory chain complex I"/>
    <property type="evidence" value="ECO:0007669"/>
    <property type="project" value="Ensembl"/>
</dbReference>
<dbReference type="GO" id="GO:0008137">
    <property type="term" value="F:NADH dehydrogenase (ubiquinone) activity"/>
    <property type="evidence" value="ECO:0000250"/>
    <property type="project" value="UniProtKB"/>
</dbReference>
<dbReference type="GO" id="GO:0015990">
    <property type="term" value="P:electron transport coupled proton transport"/>
    <property type="evidence" value="ECO:0007669"/>
    <property type="project" value="TreeGrafter"/>
</dbReference>
<dbReference type="GO" id="GO:0006120">
    <property type="term" value="P:mitochondrial electron transport, NADH to ubiquinone"/>
    <property type="evidence" value="ECO:0000250"/>
    <property type="project" value="UniProtKB"/>
</dbReference>
<dbReference type="GO" id="GO:0032981">
    <property type="term" value="P:mitochondrial respiratory chain complex I assembly"/>
    <property type="evidence" value="ECO:0000250"/>
    <property type="project" value="UniProtKB"/>
</dbReference>
<dbReference type="InterPro" id="IPR010934">
    <property type="entry name" value="NADH_DH_su5_C"/>
</dbReference>
<dbReference type="InterPro" id="IPR018393">
    <property type="entry name" value="NADHpl_OxRdtase_5_subgr"/>
</dbReference>
<dbReference type="InterPro" id="IPR001750">
    <property type="entry name" value="ND/Mrp_TM"/>
</dbReference>
<dbReference type="InterPro" id="IPR003945">
    <property type="entry name" value="NU5C-like"/>
</dbReference>
<dbReference type="InterPro" id="IPR001516">
    <property type="entry name" value="Proton_antipo_N"/>
</dbReference>
<dbReference type="NCBIfam" id="TIGR01974">
    <property type="entry name" value="NDH_I_L"/>
    <property type="match status" value="1"/>
</dbReference>
<dbReference type="PANTHER" id="PTHR42829">
    <property type="entry name" value="NADH-UBIQUINONE OXIDOREDUCTASE CHAIN 5"/>
    <property type="match status" value="1"/>
</dbReference>
<dbReference type="PANTHER" id="PTHR42829:SF2">
    <property type="entry name" value="NADH-UBIQUINONE OXIDOREDUCTASE CHAIN 5"/>
    <property type="match status" value="1"/>
</dbReference>
<dbReference type="Pfam" id="PF06455">
    <property type="entry name" value="NADH5_C"/>
    <property type="match status" value="1"/>
</dbReference>
<dbReference type="Pfam" id="PF00361">
    <property type="entry name" value="Proton_antipo_M"/>
    <property type="match status" value="1"/>
</dbReference>
<dbReference type="Pfam" id="PF00662">
    <property type="entry name" value="Proton_antipo_N"/>
    <property type="match status" value="1"/>
</dbReference>
<dbReference type="PRINTS" id="PR01434">
    <property type="entry name" value="NADHDHGNASE5"/>
</dbReference>
<keyword id="KW-0002">3D-structure</keyword>
<keyword id="KW-0249">Electron transport</keyword>
<keyword id="KW-0472">Membrane</keyword>
<keyword id="KW-0496">Mitochondrion</keyword>
<keyword id="KW-0999">Mitochondrion inner membrane</keyword>
<keyword id="KW-0520">NAD</keyword>
<keyword id="KW-1185">Reference proteome</keyword>
<keyword id="KW-0679">Respiratory chain</keyword>
<keyword id="KW-1278">Translocase</keyword>
<keyword id="KW-0812">Transmembrane</keyword>
<keyword id="KW-1133">Transmembrane helix</keyword>
<keyword id="KW-0813">Transport</keyword>
<keyword id="KW-0830">Ubiquinone</keyword>
<accession>O78756</accession>
<evidence type="ECO:0000250" key="1">
    <source>
        <dbReference type="UniProtKB" id="P03915"/>
    </source>
</evidence>
<evidence type="ECO:0000250" key="2">
    <source>
        <dbReference type="UniProtKB" id="P03920"/>
    </source>
</evidence>
<evidence type="ECO:0000255" key="3"/>
<evidence type="ECO:0000305" key="4"/>
<evidence type="ECO:0000312" key="5">
    <source>
        <dbReference type="Proteomes" id="UP000002356"/>
    </source>
</evidence>
<evidence type="ECO:0007829" key="6">
    <source>
        <dbReference type="PDB" id="6ZKA"/>
    </source>
</evidence>
<evidence type="ECO:0007829" key="7">
    <source>
        <dbReference type="PDB" id="6ZKE"/>
    </source>
</evidence>
<evidence type="ECO:0007829" key="8">
    <source>
        <dbReference type="PDB" id="6ZKV"/>
    </source>
</evidence>
<evidence type="ECO:0007829" key="9">
    <source>
        <dbReference type="PDB" id="7ZDH"/>
    </source>
</evidence>
<name>NU5M_SHEEP</name>
<sequence>MNLFSSLTLVTLILLTMPIAAINFNTHKFTNYPLYVKTTISCAFITSMIPTMMFIHTGQEMIISNWHWLTIQTLKLSLSFKMDFFSMMFVPVALFVTWSIMEFSMWYMHSDPNINQFFKYLLLFLITMLILVTANNLFQLFIGWEGVGIMSFLLIGWWYGRTDANTAALQAILYNRIGDIGFILAMAWFLINLNTWDLQQIFMLNPNDSNLPLMGLILAATGKSAQFGLHPWLPSAMEGPTPVSALLHSSTMVVAGIFLLIRFYPLTENNKFGQSIMLCLGAMTTLFTAMCALTQNDIKKIIAFSTSSQLGLMMVTIGINQPHLAFLHICTHAFFKAMLFMCSGSIIHSLNDEQDIRKMGGLFKAMPFTTTALIIGSLALTGMPFLTGFYSKDLIIESANTSYTNAWALLMTLVATSFTAIYSTRIIFFALLGQPRFPTLININENNPFLINSIKRLLIGSLFAGFIISNNIPPMTIPQMTMPHYLKMTALTVTILGFILALEISNTTHYLKFNYPSNTFKFSNLLGYYPTIMHRLTPYMNLTMSQKSASSLLDLIWLETILPKTISLAQMKMSTTITSQKGLIKLYFLSFLITILISTTLLNFHE</sequence>
<gene>
    <name type="primary">MT-ND5</name>
    <name type="synonym">MTND5</name>
    <name type="synonym">NADH5</name>
    <name type="synonym">ND5</name>
</gene>
<reference key="1">
    <citation type="journal article" date="1998" name="J. Mol. Evol.">
        <title>The complete mitochondrial DNA sequence of the domestic sheep (Ovis aries) and comparison with the other major ovine haplotype.</title>
        <authorList>
            <person name="Hiendleder S."/>
            <person name="Lewalski H."/>
            <person name="Wassmuth R."/>
            <person name="Janke A."/>
        </authorList>
    </citation>
    <scope>NUCLEOTIDE SEQUENCE [LARGE SCALE GENOMIC DNA]</scope>
    <source>
        <strain evidence="5">Merinolandschaf</strain>
        <tissue>Liver</tissue>
    </source>
</reference>
<geneLocation type="mitochondrion"/>